<reference key="1">
    <citation type="journal article" date="2001" name="Microb. Drug Resist.">
        <title>Annotated draft genomic sequence from a Streptococcus pneumoniae type 19F clinical isolate.</title>
        <authorList>
            <person name="Dopazo J."/>
            <person name="Mendoza A."/>
            <person name="Herrero J."/>
            <person name="Caldara F."/>
            <person name="Humbert Y."/>
            <person name="Friedli L."/>
            <person name="Guerrier M."/>
            <person name="Grand-Schenk E."/>
            <person name="Gandin C."/>
            <person name="de Francesco M."/>
            <person name="Polissi A."/>
            <person name="Buell G."/>
            <person name="Feger G."/>
            <person name="Garcia E."/>
            <person name="Peitsch M."/>
            <person name="Garcia-Bustos J.F."/>
        </authorList>
    </citation>
    <scope>NUCLEOTIDE SEQUENCE [LARGE SCALE GENOMIC DNA]</scope>
    <source>
        <strain>G54</strain>
    </source>
</reference>
<reference key="2">
    <citation type="submission" date="2008-03" db="EMBL/GenBank/DDBJ databases">
        <title>Pneumococcal beta glucoside metabolism investigated by whole genome comparison.</title>
        <authorList>
            <person name="Mulas L."/>
            <person name="Trappetti C."/>
            <person name="Hakenbeck R."/>
            <person name="Iannelli F."/>
            <person name="Pozzi G."/>
            <person name="Davidsen T.M."/>
            <person name="Tettelin H."/>
            <person name="Oggioni M."/>
        </authorList>
    </citation>
    <scope>NUCLEOTIDE SEQUENCE [LARGE SCALE GENOMIC DNA]</scope>
    <source>
        <strain>G54</strain>
    </source>
</reference>
<evidence type="ECO:0000255" key="1">
    <source>
        <dbReference type="HAMAP-Rule" id="MF_00378"/>
    </source>
</evidence>
<feature type="chain" id="PRO_1000122094" description="Exodeoxyribonuclease 7 large subunit">
    <location>
        <begin position="1"/>
        <end position="446"/>
    </location>
</feature>
<protein>
    <recommendedName>
        <fullName evidence="1">Exodeoxyribonuclease 7 large subunit</fullName>
        <ecNumber evidence="1">3.1.11.6</ecNumber>
    </recommendedName>
    <alternativeName>
        <fullName evidence="1">Exodeoxyribonuclease VII large subunit</fullName>
        <shortName evidence="1">Exonuclease VII large subunit</shortName>
    </alternativeName>
</protein>
<keyword id="KW-0963">Cytoplasm</keyword>
<keyword id="KW-0269">Exonuclease</keyword>
<keyword id="KW-0378">Hydrolase</keyword>
<keyword id="KW-0540">Nuclease</keyword>
<accession>B5E4U5</accession>
<dbReference type="EC" id="3.1.11.6" evidence="1"/>
<dbReference type="EMBL" id="CP001015">
    <property type="protein sequence ID" value="ACF56089.1"/>
    <property type="molecule type" value="Genomic_DNA"/>
</dbReference>
<dbReference type="SMR" id="B5E4U5"/>
<dbReference type="KEGG" id="spx:SPG_1101"/>
<dbReference type="HOGENOM" id="CLU_023625_3_1_9"/>
<dbReference type="GO" id="GO:0005737">
    <property type="term" value="C:cytoplasm"/>
    <property type="evidence" value="ECO:0007669"/>
    <property type="project" value="UniProtKB-SubCell"/>
</dbReference>
<dbReference type="GO" id="GO:0009318">
    <property type="term" value="C:exodeoxyribonuclease VII complex"/>
    <property type="evidence" value="ECO:0007669"/>
    <property type="project" value="InterPro"/>
</dbReference>
<dbReference type="GO" id="GO:0008855">
    <property type="term" value="F:exodeoxyribonuclease VII activity"/>
    <property type="evidence" value="ECO:0007669"/>
    <property type="project" value="UniProtKB-UniRule"/>
</dbReference>
<dbReference type="GO" id="GO:0003676">
    <property type="term" value="F:nucleic acid binding"/>
    <property type="evidence" value="ECO:0007669"/>
    <property type="project" value="InterPro"/>
</dbReference>
<dbReference type="GO" id="GO:0006308">
    <property type="term" value="P:DNA catabolic process"/>
    <property type="evidence" value="ECO:0007669"/>
    <property type="project" value="UniProtKB-UniRule"/>
</dbReference>
<dbReference type="CDD" id="cd04489">
    <property type="entry name" value="ExoVII_LU_OBF"/>
    <property type="match status" value="1"/>
</dbReference>
<dbReference type="HAMAP" id="MF_00378">
    <property type="entry name" value="Exonuc_7_L"/>
    <property type="match status" value="1"/>
</dbReference>
<dbReference type="InterPro" id="IPR003753">
    <property type="entry name" value="Exonuc_VII_L"/>
</dbReference>
<dbReference type="InterPro" id="IPR020579">
    <property type="entry name" value="Exonuc_VII_lsu_C"/>
</dbReference>
<dbReference type="InterPro" id="IPR025824">
    <property type="entry name" value="OB-fold_nuc-bd_dom"/>
</dbReference>
<dbReference type="NCBIfam" id="TIGR00237">
    <property type="entry name" value="xseA"/>
    <property type="match status" value="1"/>
</dbReference>
<dbReference type="PANTHER" id="PTHR30008">
    <property type="entry name" value="EXODEOXYRIBONUCLEASE 7 LARGE SUBUNIT"/>
    <property type="match status" value="1"/>
</dbReference>
<dbReference type="PANTHER" id="PTHR30008:SF0">
    <property type="entry name" value="EXODEOXYRIBONUCLEASE 7 LARGE SUBUNIT"/>
    <property type="match status" value="1"/>
</dbReference>
<dbReference type="Pfam" id="PF02601">
    <property type="entry name" value="Exonuc_VII_L"/>
    <property type="match status" value="1"/>
</dbReference>
<dbReference type="Pfam" id="PF13742">
    <property type="entry name" value="tRNA_anti_2"/>
    <property type="match status" value="1"/>
</dbReference>
<name>EX7L_STRP4</name>
<organism>
    <name type="scientific">Streptococcus pneumoniae serotype 19F (strain G54)</name>
    <dbReference type="NCBI Taxonomy" id="512566"/>
    <lineage>
        <taxon>Bacteria</taxon>
        <taxon>Bacillati</taxon>
        <taxon>Bacillota</taxon>
        <taxon>Bacilli</taxon>
        <taxon>Lactobacillales</taxon>
        <taxon>Streptococcaceae</taxon>
        <taxon>Streptococcus</taxon>
    </lineage>
</organism>
<gene>
    <name evidence="1" type="primary">xseA</name>
    <name type="ordered locus">SPG_1101</name>
</gene>
<comment type="function">
    <text evidence="1">Bidirectionally degrades single-stranded DNA into large acid-insoluble oligonucleotides, which are then degraded further into small acid-soluble oligonucleotides.</text>
</comment>
<comment type="catalytic activity">
    <reaction evidence="1">
        <text>Exonucleolytic cleavage in either 5'- to 3'- or 3'- to 5'-direction to yield nucleoside 5'-phosphates.</text>
        <dbReference type="EC" id="3.1.11.6"/>
    </reaction>
</comment>
<comment type="subunit">
    <text evidence="1">Heterooligomer composed of large and small subunits.</text>
</comment>
<comment type="subcellular location">
    <subcellularLocation>
        <location evidence="1">Cytoplasm</location>
    </subcellularLocation>
</comment>
<comment type="similarity">
    <text evidence="1">Belongs to the XseA family.</text>
</comment>
<proteinExistence type="inferred from homology"/>
<sequence length="446" mass="50536">MEKYLSVTTLTKYLKMKFDKDPYLERVYLTGQVSNFRKRPTHQYFSLKDDHAVIQATIWSGIYQKLGFDLEEGMKINVIGRVQVYEPSGSYSIIIEKAEPDGVGALAIQFEQLKKKLTEEGLFQERFKQALPQFSKRIGVVTSRSGAVIRDIITTVSRRFPGVDILLYPTKVQGEGAAEEIARNIARANQRDDLDLLIIGRGGGSIEDLWAFNEEIVVRAIFESRLPVISSVGHETDVTLADFVADRRAATPTAAAELATPVTKLDVLAHLQNQEKRMVTAVRNVLSKKQEALKKCSQSVIFRQPERLYDGYLQRLDQLQLRLKQSLRTRISDNKQLVQARTHQLVQLSPVTKIQRYQDRLGQLDKLLGSQMALVYDAKVAEVKRLSEALLMLDTSRIVARGYAIVKKEESVVDSVESLKKKDQVTLLMRDGQVELEVKDVKTKEI</sequence>